<sequence>MVREAAMLHIKEGLEQEFEDAFRQAAPIISGMKGYITHSLSKCMEETHKYLLLVEWETLEDHTEGFRGSSEYQEWKALLHRFYTPFPTVEHFQDV</sequence>
<dbReference type="EMBL" id="AL009126">
    <property type="protein sequence ID" value="CAB12220.1"/>
    <property type="molecule type" value="Genomic_DNA"/>
</dbReference>
<dbReference type="PIR" id="H69767">
    <property type="entry name" value="H69767"/>
</dbReference>
<dbReference type="RefSeq" id="NP_388294.1">
    <property type="nucleotide sequence ID" value="NC_000964.3"/>
</dbReference>
<dbReference type="RefSeq" id="WP_003234413.1">
    <property type="nucleotide sequence ID" value="NZ_OZ025638.1"/>
</dbReference>
<dbReference type="SMR" id="O31484"/>
<dbReference type="FunCoup" id="O31484">
    <property type="interactions" value="39"/>
</dbReference>
<dbReference type="STRING" id="224308.BSU04130"/>
<dbReference type="PaxDb" id="224308-BSU04130"/>
<dbReference type="DNASU" id="938254"/>
<dbReference type="EnsemblBacteria" id="CAB12220">
    <property type="protein sequence ID" value="CAB12220"/>
    <property type="gene ID" value="BSU_04130"/>
</dbReference>
<dbReference type="GeneID" id="938254"/>
<dbReference type="KEGG" id="bsu:BSU04130"/>
<dbReference type="PATRIC" id="fig|224308.179.peg.439"/>
<dbReference type="eggNOG" id="COG2329">
    <property type="taxonomic scope" value="Bacteria"/>
</dbReference>
<dbReference type="InParanoid" id="O31484"/>
<dbReference type="OrthoDB" id="9798157at2"/>
<dbReference type="PhylomeDB" id="O31484"/>
<dbReference type="BioCyc" id="BSUB:BSU04130-MONOMER"/>
<dbReference type="Proteomes" id="UP000001570">
    <property type="component" value="Chromosome"/>
</dbReference>
<dbReference type="Gene3D" id="3.30.70.100">
    <property type="match status" value="1"/>
</dbReference>
<dbReference type="InterPro" id="IPR007138">
    <property type="entry name" value="ABM_dom"/>
</dbReference>
<dbReference type="InterPro" id="IPR011008">
    <property type="entry name" value="Dimeric_a/b-barrel"/>
</dbReference>
<dbReference type="Pfam" id="PF03992">
    <property type="entry name" value="ABM"/>
    <property type="match status" value="1"/>
</dbReference>
<dbReference type="SUPFAM" id="SSF54909">
    <property type="entry name" value="Dimeric alpha+beta barrel"/>
    <property type="match status" value="1"/>
</dbReference>
<dbReference type="PROSITE" id="PS51725">
    <property type="entry name" value="ABM"/>
    <property type="match status" value="1"/>
</dbReference>
<reference key="1">
    <citation type="journal article" date="1997" name="Nature">
        <title>The complete genome sequence of the Gram-positive bacterium Bacillus subtilis.</title>
        <authorList>
            <person name="Kunst F."/>
            <person name="Ogasawara N."/>
            <person name="Moszer I."/>
            <person name="Albertini A.M."/>
            <person name="Alloni G."/>
            <person name="Azevedo V."/>
            <person name="Bertero M.G."/>
            <person name="Bessieres P."/>
            <person name="Bolotin A."/>
            <person name="Borchert S."/>
            <person name="Borriss R."/>
            <person name="Boursier L."/>
            <person name="Brans A."/>
            <person name="Braun M."/>
            <person name="Brignell S.C."/>
            <person name="Bron S."/>
            <person name="Brouillet S."/>
            <person name="Bruschi C.V."/>
            <person name="Caldwell B."/>
            <person name="Capuano V."/>
            <person name="Carter N.M."/>
            <person name="Choi S.-K."/>
            <person name="Codani J.-J."/>
            <person name="Connerton I.F."/>
            <person name="Cummings N.J."/>
            <person name="Daniel R.A."/>
            <person name="Denizot F."/>
            <person name="Devine K.M."/>
            <person name="Duesterhoeft A."/>
            <person name="Ehrlich S.D."/>
            <person name="Emmerson P.T."/>
            <person name="Entian K.-D."/>
            <person name="Errington J."/>
            <person name="Fabret C."/>
            <person name="Ferrari E."/>
            <person name="Foulger D."/>
            <person name="Fritz C."/>
            <person name="Fujita M."/>
            <person name="Fujita Y."/>
            <person name="Fuma S."/>
            <person name="Galizzi A."/>
            <person name="Galleron N."/>
            <person name="Ghim S.-Y."/>
            <person name="Glaser P."/>
            <person name="Goffeau A."/>
            <person name="Golightly E.J."/>
            <person name="Grandi G."/>
            <person name="Guiseppi G."/>
            <person name="Guy B.J."/>
            <person name="Haga K."/>
            <person name="Haiech J."/>
            <person name="Harwood C.R."/>
            <person name="Henaut A."/>
            <person name="Hilbert H."/>
            <person name="Holsappel S."/>
            <person name="Hosono S."/>
            <person name="Hullo M.-F."/>
            <person name="Itaya M."/>
            <person name="Jones L.-M."/>
            <person name="Joris B."/>
            <person name="Karamata D."/>
            <person name="Kasahara Y."/>
            <person name="Klaerr-Blanchard M."/>
            <person name="Klein C."/>
            <person name="Kobayashi Y."/>
            <person name="Koetter P."/>
            <person name="Koningstein G."/>
            <person name="Krogh S."/>
            <person name="Kumano M."/>
            <person name="Kurita K."/>
            <person name="Lapidus A."/>
            <person name="Lardinois S."/>
            <person name="Lauber J."/>
            <person name="Lazarevic V."/>
            <person name="Lee S.-M."/>
            <person name="Levine A."/>
            <person name="Liu H."/>
            <person name="Masuda S."/>
            <person name="Mauel C."/>
            <person name="Medigue C."/>
            <person name="Medina N."/>
            <person name="Mellado R.P."/>
            <person name="Mizuno M."/>
            <person name="Moestl D."/>
            <person name="Nakai S."/>
            <person name="Noback M."/>
            <person name="Noone D."/>
            <person name="O'Reilly M."/>
            <person name="Ogawa K."/>
            <person name="Ogiwara A."/>
            <person name="Oudega B."/>
            <person name="Park S.-H."/>
            <person name="Parro V."/>
            <person name="Pohl T.M."/>
            <person name="Portetelle D."/>
            <person name="Porwollik S."/>
            <person name="Prescott A.M."/>
            <person name="Presecan E."/>
            <person name="Pujic P."/>
            <person name="Purnelle B."/>
            <person name="Rapoport G."/>
            <person name="Rey M."/>
            <person name="Reynolds S."/>
            <person name="Rieger M."/>
            <person name="Rivolta C."/>
            <person name="Rocha E."/>
            <person name="Roche B."/>
            <person name="Rose M."/>
            <person name="Sadaie Y."/>
            <person name="Sato T."/>
            <person name="Scanlan E."/>
            <person name="Schleich S."/>
            <person name="Schroeter R."/>
            <person name="Scoffone F."/>
            <person name="Sekiguchi J."/>
            <person name="Sekowska A."/>
            <person name="Seror S.J."/>
            <person name="Serror P."/>
            <person name="Shin B.-S."/>
            <person name="Soldo B."/>
            <person name="Sorokin A."/>
            <person name="Tacconi E."/>
            <person name="Takagi T."/>
            <person name="Takahashi H."/>
            <person name="Takemaru K."/>
            <person name="Takeuchi M."/>
            <person name="Tamakoshi A."/>
            <person name="Tanaka T."/>
            <person name="Terpstra P."/>
            <person name="Tognoni A."/>
            <person name="Tosato V."/>
            <person name="Uchiyama S."/>
            <person name="Vandenbol M."/>
            <person name="Vannier F."/>
            <person name="Vassarotti A."/>
            <person name="Viari A."/>
            <person name="Wambutt R."/>
            <person name="Wedler E."/>
            <person name="Wedler H."/>
            <person name="Weitzenegger T."/>
            <person name="Winters P."/>
            <person name="Wipat A."/>
            <person name="Yamamoto H."/>
            <person name="Yamane K."/>
            <person name="Yasumoto K."/>
            <person name="Yata K."/>
            <person name="Yoshida K."/>
            <person name="Yoshikawa H.-F."/>
            <person name="Zumstein E."/>
            <person name="Yoshikawa H."/>
            <person name="Danchin A."/>
        </authorList>
    </citation>
    <scope>NUCLEOTIDE SEQUENCE [LARGE SCALE GENOMIC DNA]</scope>
    <source>
        <strain>168</strain>
    </source>
</reference>
<protein>
    <recommendedName>
        <fullName>Uncharacterized protein YczJ</fullName>
    </recommendedName>
</protein>
<accession>O31484</accession>
<gene>
    <name type="primary">yczJ</name>
    <name type="ordered locus">BSU04130</name>
</gene>
<feature type="chain" id="PRO_0000049483" description="Uncharacterized protein YczJ">
    <location>
        <begin position="1"/>
        <end position="95"/>
    </location>
</feature>
<feature type="domain" description="ABM">
    <location>
        <begin position="2"/>
        <end position="92"/>
    </location>
</feature>
<keyword id="KW-1185">Reference proteome</keyword>
<name>YCZJ_BACSU</name>
<proteinExistence type="predicted"/>
<organism>
    <name type="scientific">Bacillus subtilis (strain 168)</name>
    <dbReference type="NCBI Taxonomy" id="224308"/>
    <lineage>
        <taxon>Bacteria</taxon>
        <taxon>Bacillati</taxon>
        <taxon>Bacillota</taxon>
        <taxon>Bacilli</taxon>
        <taxon>Bacillales</taxon>
        <taxon>Bacillaceae</taxon>
        <taxon>Bacillus</taxon>
    </lineage>
</organism>